<name>RSSA_CRYNJ</name>
<keyword id="KW-0963">Cytoplasm</keyword>
<keyword id="KW-1185">Reference proteome</keyword>
<keyword id="KW-0687">Ribonucleoprotein</keyword>
<keyword id="KW-0689">Ribosomal protein</keyword>
<sequence>MSADKLPKALQATEDDIQLLLAAQCHLGTKNCDKSMENYVWKRRADGIHVINVGKTWEKLVLAARVLATIENPNDVCVISARPYGHRAVLKYGSFTGAQAIAGRFTPGSFTNYITRSFKEPRVIIVTDPRVDHQAIREAAYVNIPVIAFCDTDASTKFVDIAIPANNKSRHSIGLMWYLLCREVLRLRGTVPRGPTGPSGWDVLPDLFFYRDPEEIEREAAEKAAAAAAQEGADAEAAATSAAAGVTAEYDAGNAADAVLAAQPTETALDWSDEPVAGDWAAEPAADAQGGW</sequence>
<evidence type="ECO:0000255" key="1">
    <source>
        <dbReference type="HAMAP-Rule" id="MF_03015"/>
    </source>
</evidence>
<evidence type="ECO:0000256" key="2">
    <source>
        <dbReference type="SAM" id="MobiDB-lite"/>
    </source>
</evidence>
<evidence type="ECO:0000305" key="3"/>
<proteinExistence type="inferred from homology"/>
<organism>
    <name type="scientific">Cryptococcus neoformans var. neoformans serotype D (strain JEC21 / ATCC MYA-565)</name>
    <name type="common">Filobasidiella neoformans</name>
    <dbReference type="NCBI Taxonomy" id="214684"/>
    <lineage>
        <taxon>Eukaryota</taxon>
        <taxon>Fungi</taxon>
        <taxon>Dikarya</taxon>
        <taxon>Basidiomycota</taxon>
        <taxon>Agaricomycotina</taxon>
        <taxon>Tremellomycetes</taxon>
        <taxon>Tremellales</taxon>
        <taxon>Cryptococcaceae</taxon>
        <taxon>Cryptococcus</taxon>
        <taxon>Cryptococcus neoformans species complex</taxon>
    </lineage>
</organism>
<accession>P0CQ56</accession>
<accession>Q55MM0</accession>
<accession>Q5KAZ6</accession>
<comment type="function">
    <text evidence="1">Required for the assembly and/or stability of the 40S ribosomal subunit. Required for the processing of the 20S rRNA-precursor to mature 18S rRNA in a late step of the maturation of 40S ribosomal subunits.</text>
</comment>
<comment type="subunit">
    <text evidence="1">Component of the small ribosomal subunit. Mature ribosomes consist of a small (40S) and a large (60S) subunit. The 40S subunit contains about 33 different proteins and 1 molecule of RNA (18S). The 60S subunit contains about 49 different proteins and 3 molecules of RNA (25S, 5.8S and 5S). Interacts with RPS21.</text>
</comment>
<comment type="subcellular location">
    <subcellularLocation>
        <location evidence="1">Cytoplasm</location>
    </subcellularLocation>
</comment>
<comment type="similarity">
    <text evidence="1">Belongs to the universal ribosomal protein uS2 family.</text>
</comment>
<feature type="chain" id="PRO_0000371630" description="Small ribosomal subunit protein uS2">
    <location>
        <begin position="1"/>
        <end position="292"/>
    </location>
</feature>
<feature type="region of interest" description="Disordered" evidence="2">
    <location>
        <begin position="265"/>
        <end position="292"/>
    </location>
</feature>
<feature type="compositionally biased region" description="Low complexity" evidence="2">
    <location>
        <begin position="277"/>
        <end position="292"/>
    </location>
</feature>
<reference key="1">
    <citation type="journal article" date="2005" name="Science">
        <title>The genome of the basidiomycetous yeast and human pathogen Cryptococcus neoformans.</title>
        <authorList>
            <person name="Loftus B.J."/>
            <person name="Fung E."/>
            <person name="Roncaglia P."/>
            <person name="Rowley D."/>
            <person name="Amedeo P."/>
            <person name="Bruno D."/>
            <person name="Vamathevan J."/>
            <person name="Miranda M."/>
            <person name="Anderson I.J."/>
            <person name="Fraser J.A."/>
            <person name="Allen J.E."/>
            <person name="Bosdet I.E."/>
            <person name="Brent M.R."/>
            <person name="Chiu R."/>
            <person name="Doering T.L."/>
            <person name="Donlin M.J."/>
            <person name="D'Souza C.A."/>
            <person name="Fox D.S."/>
            <person name="Grinberg V."/>
            <person name="Fu J."/>
            <person name="Fukushima M."/>
            <person name="Haas B.J."/>
            <person name="Huang J.C."/>
            <person name="Janbon G."/>
            <person name="Jones S.J.M."/>
            <person name="Koo H.L."/>
            <person name="Krzywinski M.I."/>
            <person name="Kwon-Chung K.J."/>
            <person name="Lengeler K.B."/>
            <person name="Maiti R."/>
            <person name="Marra M.A."/>
            <person name="Marra R.E."/>
            <person name="Mathewson C.A."/>
            <person name="Mitchell T.G."/>
            <person name="Pertea M."/>
            <person name="Riggs F.R."/>
            <person name="Salzberg S.L."/>
            <person name="Schein J.E."/>
            <person name="Shvartsbeyn A."/>
            <person name="Shin H."/>
            <person name="Shumway M."/>
            <person name="Specht C.A."/>
            <person name="Suh B.B."/>
            <person name="Tenney A."/>
            <person name="Utterback T.R."/>
            <person name="Wickes B.L."/>
            <person name="Wortman J.R."/>
            <person name="Wye N.H."/>
            <person name="Kronstad J.W."/>
            <person name="Lodge J.K."/>
            <person name="Heitman J."/>
            <person name="Davis R.W."/>
            <person name="Fraser C.M."/>
            <person name="Hyman R.W."/>
        </authorList>
    </citation>
    <scope>NUCLEOTIDE SEQUENCE [LARGE SCALE GENOMIC DNA]</scope>
    <source>
        <strain>JEC21 / ATCC MYA-565</strain>
    </source>
</reference>
<gene>
    <name evidence="1" type="primary">RPS0</name>
    <name type="ordered locus">CNI04340</name>
</gene>
<protein>
    <recommendedName>
        <fullName evidence="1">Small ribosomal subunit protein uS2</fullName>
    </recommendedName>
    <alternativeName>
        <fullName evidence="3">40S ribosomal protein S0</fullName>
    </alternativeName>
</protein>
<dbReference type="EMBL" id="AE017349">
    <property type="protein sequence ID" value="AAW45611.1"/>
    <property type="molecule type" value="Genomic_DNA"/>
</dbReference>
<dbReference type="RefSeq" id="XP_572918.1">
    <property type="nucleotide sequence ID" value="XM_572918.1"/>
</dbReference>
<dbReference type="SMR" id="P0CQ56"/>
<dbReference type="FunCoup" id="P0CQ56">
    <property type="interactions" value="342"/>
</dbReference>
<dbReference type="STRING" id="214684.P0CQ56"/>
<dbReference type="PaxDb" id="214684-P0CQ56"/>
<dbReference type="EnsemblFungi" id="AAW45611">
    <property type="protein sequence ID" value="AAW45611"/>
    <property type="gene ID" value="CNI04340"/>
</dbReference>
<dbReference type="GeneID" id="3259390"/>
<dbReference type="KEGG" id="cne:CNI04340"/>
<dbReference type="VEuPathDB" id="FungiDB:CNI04340"/>
<dbReference type="eggNOG" id="KOG0830">
    <property type="taxonomic scope" value="Eukaryota"/>
</dbReference>
<dbReference type="HOGENOM" id="CLU_058171_1_0_1"/>
<dbReference type="InParanoid" id="P0CQ56"/>
<dbReference type="OMA" id="VKNFFEP"/>
<dbReference type="OrthoDB" id="414863at2759"/>
<dbReference type="Proteomes" id="UP000002149">
    <property type="component" value="Chromosome 9"/>
</dbReference>
<dbReference type="GO" id="GO:0022627">
    <property type="term" value="C:cytosolic small ribosomal subunit"/>
    <property type="evidence" value="ECO:0000318"/>
    <property type="project" value="GO_Central"/>
</dbReference>
<dbReference type="GO" id="GO:0003735">
    <property type="term" value="F:structural constituent of ribosome"/>
    <property type="evidence" value="ECO:0000318"/>
    <property type="project" value="GO_Central"/>
</dbReference>
<dbReference type="GO" id="GO:0002181">
    <property type="term" value="P:cytoplasmic translation"/>
    <property type="evidence" value="ECO:0000318"/>
    <property type="project" value="GO_Central"/>
</dbReference>
<dbReference type="GO" id="GO:0000028">
    <property type="term" value="P:ribosomal small subunit assembly"/>
    <property type="evidence" value="ECO:0000318"/>
    <property type="project" value="GO_Central"/>
</dbReference>
<dbReference type="CDD" id="cd01425">
    <property type="entry name" value="RPS2"/>
    <property type="match status" value="1"/>
</dbReference>
<dbReference type="FunFam" id="3.40.50.10490:FF:000010">
    <property type="entry name" value="40S ribosomal protein S0"/>
    <property type="match status" value="1"/>
</dbReference>
<dbReference type="Gene3D" id="3.40.50.10490">
    <property type="entry name" value="Glucose-6-phosphate isomerase like protein, domain 1"/>
    <property type="match status" value="1"/>
</dbReference>
<dbReference type="HAMAP" id="MF_03015">
    <property type="entry name" value="Ribosomal_S2_euk"/>
    <property type="match status" value="1"/>
</dbReference>
<dbReference type="InterPro" id="IPR001865">
    <property type="entry name" value="Ribosomal_uS2"/>
</dbReference>
<dbReference type="InterPro" id="IPR032281">
    <property type="entry name" value="Ribosomal_uS2_C"/>
</dbReference>
<dbReference type="InterPro" id="IPR018130">
    <property type="entry name" value="Ribosomal_uS2_CS"/>
</dbReference>
<dbReference type="InterPro" id="IPR027498">
    <property type="entry name" value="Ribosomal_uS2_euk"/>
</dbReference>
<dbReference type="InterPro" id="IPR005707">
    <property type="entry name" value="Ribosomal_uS2_euk/arc"/>
</dbReference>
<dbReference type="InterPro" id="IPR023591">
    <property type="entry name" value="Ribosomal_uS2_flav_dom_sf"/>
</dbReference>
<dbReference type="NCBIfam" id="TIGR01012">
    <property type="entry name" value="uS2_euk_arch"/>
    <property type="match status" value="1"/>
</dbReference>
<dbReference type="PANTHER" id="PTHR11489">
    <property type="entry name" value="40S RIBOSOMAL PROTEIN SA"/>
    <property type="match status" value="1"/>
</dbReference>
<dbReference type="Pfam" id="PF16122">
    <property type="entry name" value="40S_SA_C"/>
    <property type="match status" value="1"/>
</dbReference>
<dbReference type="Pfam" id="PF00318">
    <property type="entry name" value="Ribosomal_S2"/>
    <property type="match status" value="2"/>
</dbReference>
<dbReference type="PRINTS" id="PR00395">
    <property type="entry name" value="RIBOSOMALS2"/>
</dbReference>
<dbReference type="SUPFAM" id="SSF52313">
    <property type="entry name" value="Ribosomal protein S2"/>
    <property type="match status" value="1"/>
</dbReference>
<dbReference type="PROSITE" id="PS00963">
    <property type="entry name" value="RIBOSOMAL_S2_2"/>
    <property type="match status" value="1"/>
</dbReference>